<keyword id="KW-0326">Glycosidase</keyword>
<keyword id="KW-0378">Hydrolase</keyword>
<keyword id="KW-0546">Nucleotide metabolism</keyword>
<comment type="function">
    <text evidence="2">Catalyzes the cleavage of the N-glycosidic bond of deoxyribonucleoside 5'-monophosphates to yield deoxyribose 5-phosphate and a purine or pyrimidine base.</text>
</comment>
<comment type="catalytic activity">
    <reaction evidence="2">
        <text>a pyrimidine 2'-deoxyribonucleoside 5'-phosphate + H2O = a pyrimidine nucleobase + 2-deoxy-D-ribose 5-phosphate</text>
        <dbReference type="Rhea" id="RHEA:57852"/>
        <dbReference type="ChEBI" id="CHEBI:15377"/>
        <dbReference type="ChEBI" id="CHEBI:26432"/>
        <dbReference type="ChEBI" id="CHEBI:62877"/>
        <dbReference type="ChEBI" id="CHEBI:142209"/>
    </reaction>
</comment>
<comment type="catalytic activity">
    <reaction evidence="2">
        <text>a purine 2'-deoxyribonucleoside 5'-phosphate + H2O = a purine nucleobase + 2-deoxy-D-ribose 5-phosphate</text>
        <dbReference type="Rhea" id="RHEA:51132"/>
        <dbReference type="ChEBI" id="CHEBI:15377"/>
        <dbReference type="ChEBI" id="CHEBI:26386"/>
        <dbReference type="ChEBI" id="CHEBI:62877"/>
        <dbReference type="ChEBI" id="CHEBI:142198"/>
    </reaction>
</comment>
<comment type="subunit">
    <text evidence="2">Monomer and homodimer.</text>
</comment>
<comment type="similarity">
    <text evidence="2">Belongs to the 2'-deoxynucleoside 5'-phosphate N-hydrolase 1 family.</text>
</comment>
<evidence type="ECO:0000250" key="1">
    <source>
        <dbReference type="UniProtKB" id="O35820"/>
    </source>
</evidence>
<evidence type="ECO:0000255" key="2">
    <source>
        <dbReference type="HAMAP-Rule" id="MF_03036"/>
    </source>
</evidence>
<proteinExistence type="inferred from homology"/>
<sequence>MKRLEKMEVSEKRIKVSEKRSPKIFLSGSIRGGRQLLGTYRFMFDTLEEAGAEVLSWHVADPELEKTEMRMTEEEIYARDMGLLLKSDALIAEVTVPSTGVGYEICRALVQRIPVLCLYSPDASVSAMVLGNPDHLLDARAYPDKASLKKIITEFILAL</sequence>
<name>DNPH1_METBF</name>
<organism>
    <name type="scientific">Methanosarcina barkeri (strain Fusaro / DSM 804)</name>
    <dbReference type="NCBI Taxonomy" id="269797"/>
    <lineage>
        <taxon>Archaea</taxon>
        <taxon>Methanobacteriati</taxon>
        <taxon>Methanobacteriota</taxon>
        <taxon>Stenosarchaea group</taxon>
        <taxon>Methanomicrobia</taxon>
        <taxon>Methanosarcinales</taxon>
        <taxon>Methanosarcinaceae</taxon>
        <taxon>Methanosarcina</taxon>
    </lineage>
</organism>
<accession>Q46CC9</accession>
<feature type="chain" id="PRO_0000379467" description="Putative 2'-deoxynucleoside 5'-phosphate N-hydrolase 1">
    <location>
        <begin position="1"/>
        <end position="159"/>
    </location>
</feature>
<feature type="binding site" description="in other chain" evidence="2">
    <location>
        <begin position="25"/>
        <end position="31"/>
    </location>
    <ligand>
        <name>substrate</name>
        <note>ligand shared between homodimeric partners</note>
    </ligand>
</feature>
<feature type="binding site" description="in other chain" evidence="2">
    <location>
        <position position="40"/>
    </location>
    <ligand>
        <name>substrate</name>
        <note>ligand shared between homodimeric partners</note>
    </ligand>
</feature>
<feature type="binding site" description="in other chain" evidence="1">
    <location>
        <position position="58"/>
    </location>
    <ligand>
        <name>substrate</name>
        <note>ligand shared between homodimeric partners</note>
    </ligand>
</feature>
<feature type="binding site" description="in other chain" evidence="2">
    <location>
        <position position="104"/>
    </location>
    <ligand>
        <name>substrate</name>
        <note>ligand shared between homodimeric partners</note>
    </ligand>
</feature>
<feature type="binding site" evidence="2">
    <location>
        <begin position="126"/>
        <end position="128"/>
    </location>
    <ligand>
        <name>substrate</name>
        <note>ligand shared between homodimeric partners</note>
    </ligand>
</feature>
<dbReference type="EC" id="3.2.2.-" evidence="2"/>
<dbReference type="EMBL" id="CP000099">
    <property type="protein sequence ID" value="AAZ70463.1"/>
    <property type="molecule type" value="Genomic_DNA"/>
</dbReference>
<dbReference type="SMR" id="Q46CC9"/>
<dbReference type="STRING" id="269797.Mbar_A1510"/>
<dbReference type="PaxDb" id="269797-Mbar_A1510"/>
<dbReference type="KEGG" id="mba:Mbar_A1510"/>
<dbReference type="eggNOG" id="arCOG02435">
    <property type="taxonomic scope" value="Archaea"/>
</dbReference>
<dbReference type="HOGENOM" id="CLU_100069_1_0_2"/>
<dbReference type="OrthoDB" id="30967at2157"/>
<dbReference type="GO" id="GO:0070694">
    <property type="term" value="F:5-hydroxymethyl-dUMP N-hydrolase activity"/>
    <property type="evidence" value="ECO:0000250"/>
    <property type="project" value="UniProtKB"/>
</dbReference>
<dbReference type="GO" id="GO:0009159">
    <property type="term" value="P:deoxyribonucleoside monophosphate catabolic process"/>
    <property type="evidence" value="ECO:0000250"/>
    <property type="project" value="UniProtKB"/>
</dbReference>
<dbReference type="GO" id="GO:0009116">
    <property type="term" value="P:nucleoside metabolic process"/>
    <property type="evidence" value="ECO:0007669"/>
    <property type="project" value="UniProtKB-UniRule"/>
</dbReference>
<dbReference type="GO" id="GO:0009117">
    <property type="term" value="P:nucleotide metabolic process"/>
    <property type="evidence" value="ECO:0007669"/>
    <property type="project" value="UniProtKB-KW"/>
</dbReference>
<dbReference type="FunFam" id="3.40.50.450:FF:000019">
    <property type="entry name" value="2'-deoxynucleoside 5'-phosphate N-hydrolase 1"/>
    <property type="match status" value="1"/>
</dbReference>
<dbReference type="Gene3D" id="3.40.50.450">
    <property type="match status" value="1"/>
</dbReference>
<dbReference type="HAMAP" id="MF_03036">
    <property type="entry name" value="Nuc_phosphate_hydrolase"/>
    <property type="match status" value="1"/>
</dbReference>
<dbReference type="InterPro" id="IPR051239">
    <property type="entry name" value="2'-dNMP_N-hydrolase"/>
</dbReference>
<dbReference type="InterPro" id="IPR028607">
    <property type="entry name" value="DNPH1"/>
</dbReference>
<dbReference type="InterPro" id="IPR007710">
    <property type="entry name" value="Nucleoside_deoxyribTrfase"/>
</dbReference>
<dbReference type="PANTHER" id="PTHR15364">
    <property type="entry name" value="2'-DEOXYNUCLEOSIDE 5'-PHOSPHATE N-HYDROLASE 1"/>
    <property type="match status" value="1"/>
</dbReference>
<dbReference type="PANTHER" id="PTHR15364:SF0">
    <property type="entry name" value="2'-DEOXYNUCLEOSIDE 5'-PHOSPHATE N-HYDROLASE 1"/>
    <property type="match status" value="1"/>
</dbReference>
<dbReference type="Pfam" id="PF05014">
    <property type="entry name" value="Nuc_deoxyrib_tr"/>
    <property type="match status" value="1"/>
</dbReference>
<dbReference type="SUPFAM" id="SSF52309">
    <property type="entry name" value="N-(deoxy)ribosyltransferase-like"/>
    <property type="match status" value="1"/>
</dbReference>
<protein>
    <recommendedName>
        <fullName evidence="2">Putative 2'-deoxynucleoside 5'-phosphate N-hydrolase 1</fullName>
        <ecNumber evidence="2">3.2.2.-</ecNumber>
    </recommendedName>
</protein>
<gene>
    <name type="ordered locus">Mbar_A1510</name>
</gene>
<reference key="1">
    <citation type="journal article" date="2006" name="J. Bacteriol.">
        <title>The Methanosarcina barkeri genome: comparative analysis with Methanosarcina acetivorans and Methanosarcina mazei reveals extensive rearrangement within methanosarcinal genomes.</title>
        <authorList>
            <person name="Maeder D.L."/>
            <person name="Anderson I."/>
            <person name="Brettin T.S."/>
            <person name="Bruce D.C."/>
            <person name="Gilna P."/>
            <person name="Han C.S."/>
            <person name="Lapidus A."/>
            <person name="Metcalf W.W."/>
            <person name="Saunders E."/>
            <person name="Tapia R."/>
            <person name="Sowers K.R."/>
        </authorList>
    </citation>
    <scope>NUCLEOTIDE SEQUENCE [LARGE SCALE GENOMIC DNA]</scope>
    <source>
        <strain>Fusaro / DSM 804</strain>
    </source>
</reference>